<comment type="function">
    <text evidence="1">Catalyzes the first step in hexosamine metabolism, converting fructose-6P into glucosamine-6P using glutamine as a nitrogen source.</text>
</comment>
<comment type="catalytic activity">
    <reaction evidence="1">
        <text>D-fructose 6-phosphate + L-glutamine = D-glucosamine 6-phosphate + L-glutamate</text>
        <dbReference type="Rhea" id="RHEA:13237"/>
        <dbReference type="ChEBI" id="CHEBI:29985"/>
        <dbReference type="ChEBI" id="CHEBI:58359"/>
        <dbReference type="ChEBI" id="CHEBI:58725"/>
        <dbReference type="ChEBI" id="CHEBI:61527"/>
        <dbReference type="EC" id="2.6.1.16"/>
    </reaction>
</comment>
<comment type="subunit">
    <text evidence="1">Homodimer.</text>
</comment>
<comment type="subcellular location">
    <subcellularLocation>
        <location evidence="1">Cytoplasm</location>
    </subcellularLocation>
</comment>
<dbReference type="EC" id="2.6.1.16" evidence="1"/>
<dbReference type="EMBL" id="BX640451">
    <property type="protein sequence ID" value="CAE35165.1"/>
    <property type="molecule type" value="Genomic_DNA"/>
</dbReference>
<dbReference type="RefSeq" id="WP_003815700.1">
    <property type="nucleotide sequence ID" value="NC_002927.3"/>
</dbReference>
<dbReference type="SMR" id="Q7WE36"/>
<dbReference type="GeneID" id="93206010"/>
<dbReference type="KEGG" id="bbr:BB4802"/>
<dbReference type="eggNOG" id="COG0449">
    <property type="taxonomic scope" value="Bacteria"/>
</dbReference>
<dbReference type="HOGENOM" id="CLU_012520_5_2_4"/>
<dbReference type="Proteomes" id="UP000001027">
    <property type="component" value="Chromosome"/>
</dbReference>
<dbReference type="GO" id="GO:0005829">
    <property type="term" value="C:cytosol"/>
    <property type="evidence" value="ECO:0007669"/>
    <property type="project" value="TreeGrafter"/>
</dbReference>
<dbReference type="GO" id="GO:0097367">
    <property type="term" value="F:carbohydrate derivative binding"/>
    <property type="evidence" value="ECO:0007669"/>
    <property type="project" value="InterPro"/>
</dbReference>
<dbReference type="GO" id="GO:0004360">
    <property type="term" value="F:glutamine-fructose-6-phosphate transaminase (isomerizing) activity"/>
    <property type="evidence" value="ECO:0007669"/>
    <property type="project" value="UniProtKB-UniRule"/>
</dbReference>
<dbReference type="GO" id="GO:0005975">
    <property type="term" value="P:carbohydrate metabolic process"/>
    <property type="evidence" value="ECO:0007669"/>
    <property type="project" value="UniProtKB-UniRule"/>
</dbReference>
<dbReference type="GO" id="GO:0006002">
    <property type="term" value="P:fructose 6-phosphate metabolic process"/>
    <property type="evidence" value="ECO:0007669"/>
    <property type="project" value="TreeGrafter"/>
</dbReference>
<dbReference type="GO" id="GO:0006487">
    <property type="term" value="P:protein N-linked glycosylation"/>
    <property type="evidence" value="ECO:0007669"/>
    <property type="project" value="TreeGrafter"/>
</dbReference>
<dbReference type="GO" id="GO:0006047">
    <property type="term" value="P:UDP-N-acetylglucosamine metabolic process"/>
    <property type="evidence" value="ECO:0007669"/>
    <property type="project" value="TreeGrafter"/>
</dbReference>
<dbReference type="CDD" id="cd00714">
    <property type="entry name" value="GFAT"/>
    <property type="match status" value="1"/>
</dbReference>
<dbReference type="CDD" id="cd05008">
    <property type="entry name" value="SIS_GlmS_GlmD_1"/>
    <property type="match status" value="1"/>
</dbReference>
<dbReference type="CDD" id="cd05009">
    <property type="entry name" value="SIS_GlmS_GlmD_2"/>
    <property type="match status" value="1"/>
</dbReference>
<dbReference type="FunFam" id="3.40.50.10490:FF:000001">
    <property type="entry name" value="Glutamine--fructose-6-phosphate aminotransferase [isomerizing]"/>
    <property type="match status" value="1"/>
</dbReference>
<dbReference type="FunFam" id="3.40.50.10490:FF:000002">
    <property type="entry name" value="Glutamine--fructose-6-phosphate aminotransferase [isomerizing]"/>
    <property type="match status" value="1"/>
</dbReference>
<dbReference type="FunFam" id="3.60.20.10:FF:000006">
    <property type="entry name" value="Glutamine--fructose-6-phosphate aminotransferase [isomerizing]"/>
    <property type="match status" value="1"/>
</dbReference>
<dbReference type="Gene3D" id="3.40.50.10490">
    <property type="entry name" value="Glucose-6-phosphate isomerase like protein, domain 1"/>
    <property type="match status" value="2"/>
</dbReference>
<dbReference type="Gene3D" id="3.60.20.10">
    <property type="entry name" value="Glutamine Phosphoribosylpyrophosphate, subunit 1, domain 1"/>
    <property type="match status" value="1"/>
</dbReference>
<dbReference type="HAMAP" id="MF_00164">
    <property type="entry name" value="GlmS"/>
    <property type="match status" value="1"/>
</dbReference>
<dbReference type="InterPro" id="IPR017932">
    <property type="entry name" value="GATase_2_dom"/>
</dbReference>
<dbReference type="InterPro" id="IPR005855">
    <property type="entry name" value="GFAT"/>
</dbReference>
<dbReference type="InterPro" id="IPR047084">
    <property type="entry name" value="GFAT_N"/>
</dbReference>
<dbReference type="InterPro" id="IPR035466">
    <property type="entry name" value="GlmS/AgaS_SIS"/>
</dbReference>
<dbReference type="InterPro" id="IPR035490">
    <property type="entry name" value="GlmS/FrlB_SIS"/>
</dbReference>
<dbReference type="InterPro" id="IPR029055">
    <property type="entry name" value="Ntn_hydrolases_N"/>
</dbReference>
<dbReference type="InterPro" id="IPR001347">
    <property type="entry name" value="SIS_dom"/>
</dbReference>
<dbReference type="InterPro" id="IPR046348">
    <property type="entry name" value="SIS_dom_sf"/>
</dbReference>
<dbReference type="NCBIfam" id="TIGR01135">
    <property type="entry name" value="glmS"/>
    <property type="match status" value="1"/>
</dbReference>
<dbReference type="NCBIfam" id="NF001484">
    <property type="entry name" value="PRK00331.1"/>
    <property type="match status" value="1"/>
</dbReference>
<dbReference type="PANTHER" id="PTHR10937">
    <property type="entry name" value="GLUCOSAMINE--FRUCTOSE-6-PHOSPHATE AMINOTRANSFERASE, ISOMERIZING"/>
    <property type="match status" value="1"/>
</dbReference>
<dbReference type="PANTHER" id="PTHR10937:SF0">
    <property type="entry name" value="GLUTAMINE--FRUCTOSE-6-PHOSPHATE TRANSAMINASE (ISOMERIZING)"/>
    <property type="match status" value="1"/>
</dbReference>
<dbReference type="Pfam" id="PF13522">
    <property type="entry name" value="GATase_6"/>
    <property type="match status" value="1"/>
</dbReference>
<dbReference type="Pfam" id="PF01380">
    <property type="entry name" value="SIS"/>
    <property type="match status" value="2"/>
</dbReference>
<dbReference type="SUPFAM" id="SSF56235">
    <property type="entry name" value="N-terminal nucleophile aminohydrolases (Ntn hydrolases)"/>
    <property type="match status" value="1"/>
</dbReference>
<dbReference type="SUPFAM" id="SSF53697">
    <property type="entry name" value="SIS domain"/>
    <property type="match status" value="1"/>
</dbReference>
<dbReference type="PROSITE" id="PS51278">
    <property type="entry name" value="GATASE_TYPE_2"/>
    <property type="match status" value="1"/>
</dbReference>
<dbReference type="PROSITE" id="PS51464">
    <property type="entry name" value="SIS"/>
    <property type="match status" value="2"/>
</dbReference>
<evidence type="ECO:0000255" key="1">
    <source>
        <dbReference type="HAMAP-Rule" id="MF_00164"/>
    </source>
</evidence>
<gene>
    <name evidence="1" type="primary">glmS</name>
    <name type="ordered locus">BB4802</name>
</gene>
<sequence length="610" mass="66850">MCGIVGAVAQRDITPILIEGLKRLEYRGYDSCGVALYMDGHLRRTRSTKRVAELSEQVAEDKLGGFTGIAHTRWATHGIPATYNAHPHFSAQGKDEPRIALVHNGIIENHEELRQELQGVGYVFESQTDTEVIAHLVNHLYAGDLFEAVQQAVRRLQGAYAIAVFCRDEPHRVVGARQGSPLVVGLGQNENFLASDALALAGTTDQIIYLEDGDVVDLQLARVWIVDQAGKQVERKAHTVQVHTGAAELGPYRHFMQKEIFEQPRAVGDTLQDIESITPELFGDGAYKVFKEIDSLLILACGTSYYAGLTAKYWIESIARIPVAVEIASEYRYRDSVPNPNALVVTISQSGETADTLAALKHARSLGMQHTLTVCNVATSAMVRECELAYITRAGVEIGVASTKAFTTQLTALFLLTLALAQTRGRLTEEQEAEHLKALRHLPAAIGAVLALEPQIMAWADRFASKENALFLGRGMHYPIALEGALKLKEISYIHAEAYPAGELKHGPLALVTEHMPVVTIAPKDALLEKLKSNMQEVRARGGELYVFADADSKIANAEGMHVIRMPEYYGALSPIVHTIPLQLLSYHTACVRGTDVDKPRNLAKSVTVE</sequence>
<name>GLMS_BORBR</name>
<organism>
    <name type="scientific">Bordetella bronchiseptica (strain ATCC BAA-588 / NCTC 13252 / RB50)</name>
    <name type="common">Alcaligenes bronchisepticus</name>
    <dbReference type="NCBI Taxonomy" id="257310"/>
    <lineage>
        <taxon>Bacteria</taxon>
        <taxon>Pseudomonadati</taxon>
        <taxon>Pseudomonadota</taxon>
        <taxon>Betaproteobacteria</taxon>
        <taxon>Burkholderiales</taxon>
        <taxon>Alcaligenaceae</taxon>
        <taxon>Bordetella</taxon>
    </lineage>
</organism>
<reference key="1">
    <citation type="journal article" date="2003" name="Nat. Genet.">
        <title>Comparative analysis of the genome sequences of Bordetella pertussis, Bordetella parapertussis and Bordetella bronchiseptica.</title>
        <authorList>
            <person name="Parkhill J."/>
            <person name="Sebaihia M."/>
            <person name="Preston A."/>
            <person name="Murphy L.D."/>
            <person name="Thomson N.R."/>
            <person name="Harris D.E."/>
            <person name="Holden M.T.G."/>
            <person name="Churcher C.M."/>
            <person name="Bentley S.D."/>
            <person name="Mungall K.L."/>
            <person name="Cerdeno-Tarraga A.-M."/>
            <person name="Temple L."/>
            <person name="James K.D."/>
            <person name="Harris B."/>
            <person name="Quail M.A."/>
            <person name="Achtman M."/>
            <person name="Atkin R."/>
            <person name="Baker S."/>
            <person name="Basham D."/>
            <person name="Bason N."/>
            <person name="Cherevach I."/>
            <person name="Chillingworth T."/>
            <person name="Collins M."/>
            <person name="Cronin A."/>
            <person name="Davis P."/>
            <person name="Doggett J."/>
            <person name="Feltwell T."/>
            <person name="Goble A."/>
            <person name="Hamlin N."/>
            <person name="Hauser H."/>
            <person name="Holroyd S."/>
            <person name="Jagels K."/>
            <person name="Leather S."/>
            <person name="Moule S."/>
            <person name="Norberczak H."/>
            <person name="O'Neil S."/>
            <person name="Ormond D."/>
            <person name="Price C."/>
            <person name="Rabbinowitsch E."/>
            <person name="Rutter S."/>
            <person name="Sanders M."/>
            <person name="Saunders D."/>
            <person name="Seeger K."/>
            <person name="Sharp S."/>
            <person name="Simmonds M."/>
            <person name="Skelton J."/>
            <person name="Squares R."/>
            <person name="Squares S."/>
            <person name="Stevens K."/>
            <person name="Unwin L."/>
            <person name="Whitehead S."/>
            <person name="Barrell B.G."/>
            <person name="Maskell D.J."/>
        </authorList>
    </citation>
    <scope>NUCLEOTIDE SEQUENCE [LARGE SCALE GENOMIC DNA]</scope>
    <source>
        <strain>ATCC BAA-588 / NCTC 13252 / RB50</strain>
    </source>
</reference>
<protein>
    <recommendedName>
        <fullName evidence="1">Glutamine--fructose-6-phosphate aminotransferase [isomerizing]</fullName>
        <ecNumber evidence="1">2.6.1.16</ecNumber>
    </recommendedName>
    <alternativeName>
        <fullName evidence="1">D-fructose-6-phosphate amidotransferase</fullName>
    </alternativeName>
    <alternativeName>
        <fullName evidence="1">GFAT</fullName>
    </alternativeName>
    <alternativeName>
        <fullName evidence="1">Glucosamine-6-phosphate synthase</fullName>
    </alternativeName>
    <alternativeName>
        <fullName evidence="1">Hexosephosphate aminotransferase</fullName>
    </alternativeName>
    <alternativeName>
        <fullName evidence="1">L-glutamine--D-fructose-6-phosphate amidotransferase</fullName>
    </alternativeName>
</protein>
<keyword id="KW-0032">Aminotransferase</keyword>
<keyword id="KW-0963">Cytoplasm</keyword>
<keyword id="KW-0315">Glutamine amidotransferase</keyword>
<keyword id="KW-0677">Repeat</keyword>
<keyword id="KW-0808">Transferase</keyword>
<feature type="initiator methionine" description="Removed" evidence="1">
    <location>
        <position position="1"/>
    </location>
</feature>
<feature type="chain" id="PRO_0000135304" description="Glutamine--fructose-6-phosphate aminotransferase [isomerizing]">
    <location>
        <begin position="2"/>
        <end position="610"/>
    </location>
</feature>
<feature type="domain" description="Glutamine amidotransferase type-2" evidence="1">
    <location>
        <begin position="2"/>
        <end position="221"/>
    </location>
</feature>
<feature type="domain" description="SIS 1" evidence="1">
    <location>
        <begin position="286"/>
        <end position="426"/>
    </location>
</feature>
<feature type="domain" description="SIS 2" evidence="1">
    <location>
        <begin position="459"/>
        <end position="600"/>
    </location>
</feature>
<feature type="active site" description="Nucleophile; for GATase activity" evidence="1">
    <location>
        <position position="2"/>
    </location>
</feature>
<feature type="active site" description="For Fru-6P isomerization activity" evidence="1">
    <location>
        <position position="605"/>
    </location>
</feature>
<accession>Q7WE36</accession>
<proteinExistence type="inferred from homology"/>